<protein>
    <recommendedName>
        <fullName>Cruciferin BnC2</fullName>
    </recommendedName>
    <alternativeName>
        <fullName>11S globulin</fullName>
    </alternativeName>
    <alternativeName>
        <fullName>12S storage protein</fullName>
    </alternativeName>
    <component>
        <recommendedName>
            <fullName>Cruciferin BnC2 subunit alpha</fullName>
        </recommendedName>
    </component>
    <component>
        <recommendedName>
            <fullName>Cruciferin BnC2 subunit beta</fullName>
        </recommendedName>
    </component>
</protein>
<comment type="function">
    <text>This is a seed storage protein.</text>
</comment>
<comment type="subunit">
    <text>Hexamer; each subunit is composed of an acidic and a basic chain derived from a single precursor and linked by a disulfide bond.</text>
</comment>
<comment type="similarity">
    <text evidence="6">Belongs to the 11S seed storage protein (globulins) family.</text>
</comment>
<proteinExistence type="inferred from homology"/>
<name>CRU2_BRANA</name>
<feature type="signal peptide" evidence="1">
    <location>
        <begin position="1"/>
        <end position="23"/>
    </location>
</feature>
<feature type="chain" id="PRO_0000032034" description="Cruciferin BnC2 subunit alpha">
    <location>
        <begin position="24"/>
        <end position="306"/>
    </location>
</feature>
<feature type="chain" id="PRO_0000032035" description="Cruciferin BnC2 subunit beta">
    <location>
        <begin position="307"/>
        <end position="496"/>
    </location>
</feature>
<feature type="domain" description="Cupin type-1 1" evidence="4">
    <location>
        <begin position="35"/>
        <end position="269"/>
    </location>
</feature>
<feature type="domain" description="Cupin type-1 2" evidence="4">
    <location>
        <begin position="319"/>
        <end position="468"/>
    </location>
</feature>
<feature type="region of interest" description="Disordered" evidence="5">
    <location>
        <begin position="114"/>
        <end position="170"/>
    </location>
</feature>
<feature type="compositionally biased region" description="Gly residues" evidence="5">
    <location>
        <begin position="122"/>
        <end position="154"/>
    </location>
</feature>
<feature type="modified residue" description="Phosphothreonine" evidence="3">
    <location>
        <position position="109"/>
    </location>
</feature>
<feature type="modified residue" description="Phosphotyrosine" evidence="3">
    <location>
        <position position="336"/>
    </location>
</feature>
<feature type="modified residue" description="Phosphoserine" evidence="2">
    <location>
        <position position="338"/>
    </location>
</feature>
<feature type="modified residue" description="Phosphothreonine" evidence="3">
    <location>
        <position position="432"/>
    </location>
</feature>
<feature type="disulfide bond" evidence="1">
    <location>
        <begin position="30"/>
        <end position="63"/>
    </location>
</feature>
<feature type="disulfide bond" description="Interchain (between alpha and beta chains)" evidence="4">
    <location>
        <begin position="106"/>
        <end position="313"/>
    </location>
</feature>
<gene>
    <name type="primary">BnC2</name>
</gene>
<reference key="1">
    <citation type="journal article" date="1992" name="Plant Mol. Biol.">
        <title>Molecular analysis of a cruciferin storage protein gene family of Brassica napus.</title>
        <authorList>
            <person name="Breen J.P."/>
            <person name="Crouch M.L."/>
        </authorList>
    </citation>
    <scope>NUCLEOTIDE SEQUENCE [GENOMIC DNA]</scope>
    <source>
        <strain>cv. Tower</strain>
    </source>
</reference>
<organism>
    <name type="scientific">Brassica napus</name>
    <name type="common">Rape</name>
    <dbReference type="NCBI Taxonomy" id="3708"/>
    <lineage>
        <taxon>Eukaryota</taxon>
        <taxon>Viridiplantae</taxon>
        <taxon>Streptophyta</taxon>
        <taxon>Embryophyta</taxon>
        <taxon>Tracheophyta</taxon>
        <taxon>Spermatophyta</taxon>
        <taxon>Magnoliopsida</taxon>
        <taxon>eudicotyledons</taxon>
        <taxon>Gunneridae</taxon>
        <taxon>Pentapetalae</taxon>
        <taxon>rosids</taxon>
        <taxon>malvids</taxon>
        <taxon>Brassicales</taxon>
        <taxon>Brassicaceae</taxon>
        <taxon>Brassiceae</taxon>
        <taxon>Brassica</taxon>
    </lineage>
</organism>
<accession>P33524</accession>
<dbReference type="EMBL" id="X59295">
    <property type="protein sequence ID" value="CAA41985.1"/>
    <property type="molecule type" value="Genomic_DNA"/>
</dbReference>
<dbReference type="PIR" id="S25091">
    <property type="entry name" value="S25091"/>
</dbReference>
<dbReference type="SMR" id="P33524"/>
<dbReference type="GO" id="GO:0045735">
    <property type="term" value="F:nutrient reservoir activity"/>
    <property type="evidence" value="ECO:0007669"/>
    <property type="project" value="UniProtKB-KW"/>
</dbReference>
<dbReference type="GO" id="GO:0010431">
    <property type="term" value="P:seed maturation"/>
    <property type="evidence" value="ECO:0007669"/>
    <property type="project" value="UniProtKB-ARBA"/>
</dbReference>
<dbReference type="CDD" id="cd02243">
    <property type="entry name" value="cupin_11S_legumin_C"/>
    <property type="match status" value="1"/>
</dbReference>
<dbReference type="CDD" id="cd02242">
    <property type="entry name" value="cupin_11S_legumin_N"/>
    <property type="match status" value="1"/>
</dbReference>
<dbReference type="FunFam" id="2.60.120.10:FF:000073">
    <property type="entry name" value="Glycinin G1"/>
    <property type="match status" value="1"/>
</dbReference>
<dbReference type="Gene3D" id="2.60.120.10">
    <property type="entry name" value="Jelly Rolls"/>
    <property type="match status" value="2"/>
</dbReference>
<dbReference type="InterPro" id="IPR022379">
    <property type="entry name" value="11S_seedstore_CS"/>
</dbReference>
<dbReference type="InterPro" id="IPR006044">
    <property type="entry name" value="11S_seedstore_pln"/>
</dbReference>
<dbReference type="InterPro" id="IPR006045">
    <property type="entry name" value="Cupin_1"/>
</dbReference>
<dbReference type="InterPro" id="IPR014710">
    <property type="entry name" value="RmlC-like_jellyroll"/>
</dbReference>
<dbReference type="InterPro" id="IPR011051">
    <property type="entry name" value="RmlC_Cupin_sf"/>
</dbReference>
<dbReference type="InterPro" id="IPR050253">
    <property type="entry name" value="Seed_Storage-Functional"/>
</dbReference>
<dbReference type="PANTHER" id="PTHR31189:SF49">
    <property type="entry name" value="11S GLOBULIN"/>
    <property type="match status" value="1"/>
</dbReference>
<dbReference type="PANTHER" id="PTHR31189">
    <property type="entry name" value="OS03G0336100 PROTEIN-RELATED"/>
    <property type="match status" value="1"/>
</dbReference>
<dbReference type="Pfam" id="PF00190">
    <property type="entry name" value="Cupin_1"/>
    <property type="match status" value="2"/>
</dbReference>
<dbReference type="PRINTS" id="PR00439">
    <property type="entry name" value="11SGLOBULIN"/>
</dbReference>
<dbReference type="SMART" id="SM00835">
    <property type="entry name" value="Cupin_1"/>
    <property type="match status" value="2"/>
</dbReference>
<dbReference type="SUPFAM" id="SSF51182">
    <property type="entry name" value="RmlC-like cupins"/>
    <property type="match status" value="1"/>
</dbReference>
<dbReference type="PROSITE" id="PS00305">
    <property type="entry name" value="11S_SEED_STORAGE"/>
    <property type="match status" value="1"/>
</dbReference>
<evidence type="ECO:0000250" key="1"/>
<evidence type="ECO:0000250" key="2">
    <source>
        <dbReference type="UniProtKB" id="P15455"/>
    </source>
</evidence>
<evidence type="ECO:0000250" key="3">
    <source>
        <dbReference type="UniProtKB" id="P15456"/>
    </source>
</evidence>
<evidence type="ECO:0000255" key="4"/>
<evidence type="ECO:0000256" key="5">
    <source>
        <dbReference type="SAM" id="MobiDB-lite"/>
    </source>
</evidence>
<evidence type="ECO:0000305" key="6"/>
<keyword id="KW-1015">Disulfide bond</keyword>
<keyword id="KW-0597">Phosphoprotein</keyword>
<keyword id="KW-0708">Seed storage protein</keyword>
<keyword id="KW-0732">Signal</keyword>
<keyword id="KW-0758">Storage protein</keyword>
<sequence>MARLSSLLYFSITVLIFLHGSTAQQFPNECQLDQLNALEPSHVLKAEAGRIEVWDHHAPQLRCSGVSFVRYIIESQGLYLPSFLNTANVSFVAKGQGLMGRVVPGCAETFQDSSVFQPGSGSPFGEGQGQGQQGQGQGQGQGQGKGQQGQGKGQQGQSQGQQGQGQGFRDMHQKVEHIRSGDTIATHPGVAQWFYNNGNQPLVIVAVMDLASHQNQLDRNPSQFYLAGKNPQGQSWLHGRGQQPQNNILNGFSPEVLAQAFKIDVRTAQQLQNQQDNRGNIVRVQGPFGVIRPPLKSQRPQETEANGLEETICSARCTDNLDDPSNADVYKPQLGYISILNSYDLPILRVLRLSALRGSIRQNAMVLPQWKSKSNAVLYVTDGEAQIQVVNDNGDRVFDGQVSQGQLLSIPQGFSVVKRATSDQFRWIEFKTNANAQINTLAGRTSVMRGLPLEVIANGYQISLEEARRVKFNTIETTLTHSSGPASYGRPRKADA</sequence>